<evidence type="ECO:0000255" key="1"/>
<evidence type="ECO:0000255" key="2">
    <source>
        <dbReference type="PROSITE-ProRule" id="PRU10011"/>
    </source>
</evidence>
<evidence type="ECO:0000269" key="3">
    <source>
    </source>
</evidence>
<evidence type="ECO:0000269" key="4">
    <source>
    </source>
</evidence>
<evidence type="ECO:0000305" key="5"/>
<evidence type="ECO:0007829" key="6">
    <source>
        <dbReference type="PDB" id="1BVU"/>
    </source>
</evidence>
<reference key="1">
    <citation type="submission" date="1993-06" db="EMBL/GenBank/DDBJ databases">
        <title>Cloning and sequencing of glutamate dehydrogenases from hyperthermophilic archaea.</title>
        <authorList>
            <person name="Borges K.M."/>
            <person name="Diruggiero J."/>
            <person name="Robb F.T."/>
        </authorList>
    </citation>
    <scope>NUCLEOTIDE SEQUENCE [GENOMIC DNA]</scope>
</reference>
<reference key="2">
    <citation type="journal article" date="2012" name="J. Bacteriol.">
        <title>Genome sequence of the model hyperthermophilic archaeon Thermococcus litoralis NS-C.</title>
        <authorList>
            <person name="Gardner A.F."/>
            <person name="Kumar S."/>
            <person name="Perler F.B."/>
        </authorList>
    </citation>
    <scope>NUCLEOTIDE SEQUENCE [LARGE SCALE GENOMIC DNA]</scope>
    <source>
        <strain>ATCC 51850 / DSM 5473 / JCM 8560 / NS-C</strain>
    </source>
</reference>
<reference key="3">
    <citation type="journal article" date="1994" name="Appl. Environ. Microbiol.">
        <title>Purification and characterization of NADP-specific alcohol dehydrogenase and glutamate dehydrogenase from the hyperthermophilic archaeon Thermococcus litoralis.</title>
        <authorList>
            <person name="Ma K."/>
            <person name="Robb F.T."/>
            <person name="Adams M.W.W."/>
        </authorList>
    </citation>
    <scope>PROTEIN SEQUENCE OF 2-21</scope>
    <scope>SUBCELLULAR LOCATION</scope>
    <source>
        <strain>ATCC 51850 / DSM 5473 / JCM 8560 / NS-C</strain>
    </source>
</reference>
<reference key="4">
    <citation type="journal article" date="1999" name="J. Mol. Biol.">
        <title>Structure determination of the glutamate dehydrogenase from the hyperthermophile Thermococcus litoralis and its comparison with that from Pyrococcus furiosus.</title>
        <authorList>
            <person name="Britton K.L."/>
            <person name="Yip K.S.P."/>
            <person name="Sedelnikova S.E."/>
            <person name="Stillman T.J."/>
            <person name="Adams M.W.W."/>
            <person name="Ma K."/>
            <person name="Maeder D.L."/>
            <person name="Robb F.T."/>
            <person name="Tolliday N."/>
            <person name="Vetriani C."/>
            <person name="Rice D.W."/>
            <person name="Baker P.J."/>
        </authorList>
    </citation>
    <scope>SUBUNIT</scope>
    <scope>X-RAY CRYSTALLOGRAPHY (2.5 ANGSTROMS)</scope>
</reference>
<name>DHE3_THELN</name>
<dbReference type="EC" id="1.4.1.3"/>
<dbReference type="EMBL" id="L19995">
    <property type="protein sequence ID" value="AAA72393.1"/>
    <property type="molecule type" value="Genomic_DNA"/>
</dbReference>
<dbReference type="EMBL" id="CP006670">
    <property type="protein sequence ID" value="EHR77478.1"/>
    <property type="molecule type" value="Genomic_DNA"/>
</dbReference>
<dbReference type="RefSeq" id="WP_004070133.1">
    <property type="nucleotide sequence ID" value="NC_022084.1"/>
</dbReference>
<dbReference type="PDB" id="1BVU">
    <property type="method" value="X-ray"/>
    <property type="resolution" value="2.50 A"/>
    <property type="chains" value="A/B/C/D/E/F=2-419"/>
</dbReference>
<dbReference type="PDBsum" id="1BVU"/>
<dbReference type="SMR" id="Q56304"/>
<dbReference type="STRING" id="523849.OCC_00135"/>
<dbReference type="PaxDb" id="523849-OCC_00135"/>
<dbReference type="GeneID" id="16550867"/>
<dbReference type="KEGG" id="tlt:OCC_00135"/>
<dbReference type="HOGENOM" id="CLU_025763_1_2_2"/>
<dbReference type="OrthoDB" id="6425at2157"/>
<dbReference type="BRENDA" id="1.4.1.3">
    <property type="organism ID" value="6302"/>
</dbReference>
<dbReference type="BRENDA" id="1.4.1.4">
    <property type="organism ID" value="6302"/>
</dbReference>
<dbReference type="EvolutionaryTrace" id="Q56304"/>
<dbReference type="Proteomes" id="UP000015502">
    <property type="component" value="Chromosome"/>
</dbReference>
<dbReference type="GO" id="GO:0005737">
    <property type="term" value="C:cytoplasm"/>
    <property type="evidence" value="ECO:0007669"/>
    <property type="project" value="UniProtKB-SubCell"/>
</dbReference>
<dbReference type="GO" id="GO:0004352">
    <property type="term" value="F:glutamate dehydrogenase (NAD+) activity"/>
    <property type="evidence" value="ECO:0007669"/>
    <property type="project" value="RHEA"/>
</dbReference>
<dbReference type="GO" id="GO:0004354">
    <property type="term" value="F:glutamate dehydrogenase (NADP+) activity"/>
    <property type="evidence" value="ECO:0007669"/>
    <property type="project" value="RHEA"/>
</dbReference>
<dbReference type="GO" id="GO:0006538">
    <property type="term" value="P:glutamate catabolic process"/>
    <property type="evidence" value="ECO:0007669"/>
    <property type="project" value="TreeGrafter"/>
</dbReference>
<dbReference type="CDD" id="cd01076">
    <property type="entry name" value="NAD_bind_1_Glu_DH"/>
    <property type="match status" value="1"/>
</dbReference>
<dbReference type="FunFam" id="3.40.50.10860:FF:000003">
    <property type="entry name" value="Glutamate dehydrogenase"/>
    <property type="match status" value="1"/>
</dbReference>
<dbReference type="Gene3D" id="3.40.50.10860">
    <property type="entry name" value="Leucine Dehydrogenase, chain A, domain 1"/>
    <property type="match status" value="1"/>
</dbReference>
<dbReference type="Gene3D" id="3.40.50.720">
    <property type="entry name" value="NAD(P)-binding Rossmann-like Domain"/>
    <property type="match status" value="1"/>
</dbReference>
<dbReference type="InterPro" id="IPR046346">
    <property type="entry name" value="Aminoacid_DH-like_N_sf"/>
</dbReference>
<dbReference type="InterPro" id="IPR053388">
    <property type="entry name" value="GLPV_dehydrogenases"/>
</dbReference>
<dbReference type="InterPro" id="IPR006095">
    <property type="entry name" value="Glu/Leu/Phe/Val/Trp_DH"/>
</dbReference>
<dbReference type="InterPro" id="IPR006096">
    <property type="entry name" value="Glu/Leu/Phe/Val/Trp_DH_C"/>
</dbReference>
<dbReference type="InterPro" id="IPR006097">
    <property type="entry name" value="Glu/Leu/Phe/Val/Trp_DH_dimer"/>
</dbReference>
<dbReference type="InterPro" id="IPR033524">
    <property type="entry name" value="Glu/Leu/Phe/Val_DH_AS"/>
</dbReference>
<dbReference type="InterPro" id="IPR014362">
    <property type="entry name" value="Glu_DH"/>
</dbReference>
<dbReference type="InterPro" id="IPR036291">
    <property type="entry name" value="NAD(P)-bd_dom_sf"/>
</dbReference>
<dbReference type="InterPro" id="IPR033922">
    <property type="entry name" value="NAD_bind_Glu_DH"/>
</dbReference>
<dbReference type="NCBIfam" id="NF040817">
    <property type="entry name" value="GdhA_Arch"/>
    <property type="match status" value="1"/>
</dbReference>
<dbReference type="PANTHER" id="PTHR11606">
    <property type="entry name" value="GLUTAMATE DEHYDROGENASE"/>
    <property type="match status" value="1"/>
</dbReference>
<dbReference type="PANTHER" id="PTHR11606:SF13">
    <property type="entry name" value="GLUTAMATE DEHYDROGENASE 1, MITOCHONDRIAL"/>
    <property type="match status" value="1"/>
</dbReference>
<dbReference type="Pfam" id="PF00208">
    <property type="entry name" value="ELFV_dehydrog"/>
    <property type="match status" value="1"/>
</dbReference>
<dbReference type="Pfam" id="PF02812">
    <property type="entry name" value="ELFV_dehydrog_N"/>
    <property type="match status" value="1"/>
</dbReference>
<dbReference type="PIRSF" id="PIRSF000185">
    <property type="entry name" value="Glu_DH"/>
    <property type="match status" value="1"/>
</dbReference>
<dbReference type="PRINTS" id="PR00082">
    <property type="entry name" value="GLFDHDRGNASE"/>
</dbReference>
<dbReference type="SMART" id="SM00839">
    <property type="entry name" value="ELFV_dehydrog"/>
    <property type="match status" value="1"/>
</dbReference>
<dbReference type="SUPFAM" id="SSF53223">
    <property type="entry name" value="Aminoacid dehydrogenase-like, N-terminal domain"/>
    <property type="match status" value="1"/>
</dbReference>
<dbReference type="SUPFAM" id="SSF51735">
    <property type="entry name" value="NAD(P)-binding Rossmann-fold domains"/>
    <property type="match status" value="1"/>
</dbReference>
<dbReference type="PROSITE" id="PS00074">
    <property type="entry name" value="GLFV_DEHYDROGENASE"/>
    <property type="match status" value="1"/>
</dbReference>
<proteinExistence type="evidence at protein level"/>
<feature type="initiator methionine" description="Removed" evidence="4">
    <location>
        <position position="1"/>
    </location>
</feature>
<feature type="chain" id="PRO_0000182762" description="Glutamate dehydrogenase">
    <location>
        <begin position="2"/>
        <end position="419"/>
    </location>
</feature>
<feature type="active site" evidence="2">
    <location>
        <position position="105"/>
    </location>
</feature>
<feature type="binding site" evidence="1">
    <location>
        <begin position="219"/>
        <end position="225"/>
    </location>
    <ligand>
        <name>NAD(+)</name>
        <dbReference type="ChEBI" id="CHEBI:57540"/>
    </ligand>
</feature>
<feature type="sequence conflict" description="In Ref. 1; AAA72393." evidence="5" ref="1">
    <original>S</original>
    <variation>T</variation>
    <location>
        <position position="245"/>
    </location>
</feature>
<feature type="helix" evidence="6">
    <location>
        <begin position="5"/>
        <end position="18"/>
    </location>
</feature>
<feature type="helix" evidence="6">
    <location>
        <begin position="25"/>
        <end position="30"/>
    </location>
</feature>
<feature type="strand" evidence="6">
    <location>
        <begin position="35"/>
        <end position="45"/>
    </location>
</feature>
<feature type="strand" evidence="6">
    <location>
        <begin position="51"/>
        <end position="62"/>
    </location>
</feature>
<feature type="strand" evidence="6">
    <location>
        <begin position="66"/>
        <end position="69"/>
    </location>
</feature>
<feature type="strand" evidence="6">
    <location>
        <begin position="72"/>
        <end position="75"/>
    </location>
</feature>
<feature type="helix" evidence="6">
    <location>
        <begin position="80"/>
        <end position="97"/>
    </location>
</feature>
<feature type="strand" evidence="6">
    <location>
        <begin position="102"/>
        <end position="110"/>
    </location>
</feature>
<feature type="helix" evidence="6">
    <location>
        <begin position="112"/>
        <end position="114"/>
    </location>
</feature>
<feature type="helix" evidence="6">
    <location>
        <begin position="117"/>
        <end position="131"/>
    </location>
</feature>
<feature type="helix" evidence="6">
    <location>
        <begin position="132"/>
        <end position="134"/>
    </location>
</feature>
<feature type="turn" evidence="6">
    <location>
        <begin position="137"/>
        <end position="139"/>
    </location>
</feature>
<feature type="helix" evidence="6">
    <location>
        <begin position="150"/>
        <end position="164"/>
    </location>
</feature>
<feature type="helix" evidence="6">
    <location>
        <begin position="170"/>
        <end position="173"/>
    </location>
</feature>
<feature type="strand" evidence="6">
    <location>
        <begin position="174"/>
        <end position="176"/>
    </location>
</feature>
<feature type="helix" evidence="6">
    <location>
        <begin position="179"/>
        <end position="181"/>
    </location>
</feature>
<feature type="helix" evidence="6">
    <location>
        <begin position="190"/>
        <end position="205"/>
    </location>
</feature>
<feature type="strand" evidence="6">
    <location>
        <begin position="214"/>
        <end position="218"/>
    </location>
</feature>
<feature type="helix" evidence="6">
    <location>
        <begin position="222"/>
        <end position="235"/>
    </location>
</feature>
<feature type="strand" evidence="6">
    <location>
        <begin position="238"/>
        <end position="243"/>
    </location>
</feature>
<feature type="strand" evidence="6">
    <location>
        <begin position="248"/>
        <end position="250"/>
    </location>
</feature>
<feature type="helix" evidence="6">
    <location>
        <begin position="257"/>
        <end position="267"/>
    </location>
</feature>
<feature type="strand" evidence="6">
    <location>
        <begin position="268"/>
        <end position="270"/>
    </location>
</feature>
<feature type="strand" evidence="6">
    <location>
        <begin position="277"/>
        <end position="279"/>
    </location>
</feature>
<feature type="helix" evidence="6">
    <location>
        <begin position="281"/>
        <end position="286"/>
    </location>
</feature>
<feature type="strand" evidence="6">
    <location>
        <begin position="290"/>
        <end position="294"/>
    </location>
</feature>
<feature type="helix" evidence="6">
    <location>
        <begin position="303"/>
        <end position="306"/>
    </location>
</feature>
<feature type="strand" evidence="6">
    <location>
        <begin position="312"/>
        <end position="315"/>
    </location>
</feature>
<feature type="strand" evidence="6">
    <location>
        <begin position="318"/>
        <end position="320"/>
    </location>
</feature>
<feature type="helix" evidence="6">
    <location>
        <begin position="324"/>
        <end position="333"/>
    </location>
</feature>
<feature type="strand" evidence="6">
    <location>
        <begin position="336"/>
        <end position="338"/>
    </location>
</feature>
<feature type="helix" evidence="6">
    <location>
        <begin position="340"/>
        <end position="343"/>
    </location>
</feature>
<feature type="helix" evidence="6">
    <location>
        <begin position="346"/>
        <end position="360"/>
    </location>
</feature>
<feature type="helix" evidence="6">
    <location>
        <begin position="366"/>
        <end position="391"/>
    </location>
</feature>
<feature type="helix" evidence="6">
    <location>
        <begin position="395"/>
        <end position="414"/>
    </location>
</feature>
<accession>Q56304</accession>
<accession>H3ZRF0</accession>
<accession>Q9UWK7</accession>
<keyword id="KW-0002">3D-structure</keyword>
<keyword id="KW-0963">Cytoplasm</keyword>
<keyword id="KW-0903">Direct protein sequencing</keyword>
<keyword id="KW-0520">NAD</keyword>
<keyword id="KW-0521">NADP</keyword>
<keyword id="KW-0560">Oxidoreductase</keyword>
<organism>
    <name type="scientific">Thermococcus litoralis (strain ATCC 51850 / DSM 5473 / JCM 8560 / NS-C)</name>
    <dbReference type="NCBI Taxonomy" id="523849"/>
    <lineage>
        <taxon>Archaea</taxon>
        <taxon>Methanobacteriati</taxon>
        <taxon>Methanobacteriota</taxon>
        <taxon>Thermococci</taxon>
        <taxon>Thermococcales</taxon>
        <taxon>Thermococcaceae</taxon>
        <taxon>Thermococcus</taxon>
    </lineage>
</organism>
<comment type="catalytic activity">
    <reaction evidence="2">
        <text>L-glutamate + NAD(+) + H2O = 2-oxoglutarate + NH4(+) + NADH + H(+)</text>
        <dbReference type="Rhea" id="RHEA:15133"/>
        <dbReference type="ChEBI" id="CHEBI:15377"/>
        <dbReference type="ChEBI" id="CHEBI:15378"/>
        <dbReference type="ChEBI" id="CHEBI:16810"/>
        <dbReference type="ChEBI" id="CHEBI:28938"/>
        <dbReference type="ChEBI" id="CHEBI:29985"/>
        <dbReference type="ChEBI" id="CHEBI:57540"/>
        <dbReference type="ChEBI" id="CHEBI:57945"/>
        <dbReference type="EC" id="1.4.1.3"/>
    </reaction>
</comment>
<comment type="catalytic activity">
    <reaction evidence="2">
        <text>L-glutamate + NADP(+) + H2O = 2-oxoglutarate + NH4(+) + NADPH + H(+)</text>
        <dbReference type="Rhea" id="RHEA:11612"/>
        <dbReference type="ChEBI" id="CHEBI:15377"/>
        <dbReference type="ChEBI" id="CHEBI:15378"/>
        <dbReference type="ChEBI" id="CHEBI:16810"/>
        <dbReference type="ChEBI" id="CHEBI:28938"/>
        <dbReference type="ChEBI" id="CHEBI:29985"/>
        <dbReference type="ChEBI" id="CHEBI:57783"/>
        <dbReference type="ChEBI" id="CHEBI:58349"/>
        <dbReference type="EC" id="1.4.1.3"/>
    </reaction>
</comment>
<comment type="biophysicochemical properties">
    <phDependence>
        <text>Optimum pH is 8.0.</text>
    </phDependence>
    <temperatureDependence>
        <text>Optimum temperature is above 95 degrees Celsius.</text>
    </temperatureDependence>
</comment>
<comment type="subunit">
    <text evidence="3">Homohexamer.</text>
</comment>
<comment type="subcellular location">
    <subcellularLocation>
        <location evidence="4">Cytoplasm</location>
    </subcellularLocation>
</comment>
<comment type="similarity">
    <text evidence="5">Belongs to the Glu/Leu/Phe/Val dehydrogenases family.</text>
</comment>
<gene>
    <name type="primary">gdhA</name>
    <name type="ORF">OCC_00135</name>
</gene>
<protein>
    <recommendedName>
        <fullName>Glutamate dehydrogenase</fullName>
        <shortName>GDH</shortName>
        <ecNumber>1.4.1.3</ecNumber>
    </recommendedName>
</protein>
<sequence length="419" mass="46726">MVEQDPFEIAVKQLERAAQYMDISEEALEFLKRPQRIVEVSIPVEMDDGSVKVFTGFRVQYNWARGPTKGGIRWHPEETLSTVKALAAWMTWKTAVMDLPYGGGKGGVICNPKEMSDREKERLARGYVRAIYDVISPYTDIPAPDVYTNPQIMAWMMDEYETISRRKDPSFGVITGKPPSVGGIVARMDATARGASYTVREAAKALGMDLKGKTIAIQGYGNAGYYMAKIMSEEYGMKVVAVSDSKGGIYNPDGLNADEVLAWKKKTGSVKDFPGATNITNEELLELEVDVLAPSAIEEVITKKNADNIKAKIVAELANGPTTPEADEILYEKGILIIPDFLCNAGGVTVSYFEWVQNITGDYWTVEETRAKLDKKMTKAFWDVYNTHKEKNINMRDAAYVVAVSRVYQAMKDRGWIKK</sequence>